<accession>B4S9D5</accession>
<comment type="function">
    <text evidence="1">Catalyzes the attachment of proline to tRNA(Pro) in a two-step reaction: proline is first activated by ATP to form Pro-AMP and then transferred to the acceptor end of tRNA(Pro).</text>
</comment>
<comment type="catalytic activity">
    <reaction evidence="1">
        <text>tRNA(Pro) + L-proline + ATP = L-prolyl-tRNA(Pro) + AMP + diphosphate</text>
        <dbReference type="Rhea" id="RHEA:14305"/>
        <dbReference type="Rhea" id="RHEA-COMP:9700"/>
        <dbReference type="Rhea" id="RHEA-COMP:9702"/>
        <dbReference type="ChEBI" id="CHEBI:30616"/>
        <dbReference type="ChEBI" id="CHEBI:33019"/>
        <dbReference type="ChEBI" id="CHEBI:60039"/>
        <dbReference type="ChEBI" id="CHEBI:78442"/>
        <dbReference type="ChEBI" id="CHEBI:78532"/>
        <dbReference type="ChEBI" id="CHEBI:456215"/>
        <dbReference type="EC" id="6.1.1.15"/>
    </reaction>
</comment>
<comment type="subunit">
    <text evidence="1">Homodimer.</text>
</comment>
<comment type="subcellular location">
    <subcellularLocation>
        <location evidence="1">Cytoplasm</location>
    </subcellularLocation>
</comment>
<comment type="domain">
    <text evidence="1">Consists of three domains: the N-terminal catalytic domain, the anticodon-binding domain and the C-terminal extension.</text>
</comment>
<comment type="similarity">
    <text evidence="1">Belongs to the class-II aminoacyl-tRNA synthetase family. ProS type 3 subfamily.</text>
</comment>
<sequence>MAEKITLRETDYSQWYIDLVRSAKLADYSDVRGCMIIRPNGYAIWEKMQAALDAMFKATGHVNAYFPLFIPESFIKKEAEHIEGFAPECAVVTHGGGEQLAENLYVRPTSETIIWSSYKKWIQSYRDLPILINQWANVVRWEMRTRLFLRTTEFLWQEGHTAHATSTEAQEEVMRMINVYKTFAEEYMALPVIMGRKTESEKFAGAVETWCIEAMMQDKKALQAGTSHNLGQNFAKAFDCRFQSKEGALEYVWATSWGVSTRLIGALIMAHSDDRGLVLPPKLATRQVVIIPILKGDISAVIEKARSIAAELNQKGIAAFVDDSDQNSPGWKFAEYELQGIPVRLELGPRDIQSSTCIAARRDTGEKSKLQLDSSLADQINSLLESIQTNLFNRALSFREKHTLEVSSYSEFKANIDNGFLVAHWDGTDETEAKIKEETKATIRVMPADPEMVLRYGMDQPGTCIYSGKPSTRKVIFAKAY</sequence>
<dbReference type="EC" id="6.1.1.15" evidence="1"/>
<dbReference type="EMBL" id="CP001108">
    <property type="protein sequence ID" value="ACF46605.1"/>
    <property type="molecule type" value="Genomic_DNA"/>
</dbReference>
<dbReference type="RefSeq" id="WP_012506138.1">
    <property type="nucleotide sequence ID" value="NC_011059.1"/>
</dbReference>
<dbReference type="SMR" id="B4S9D5"/>
<dbReference type="STRING" id="290512.Paes_1587"/>
<dbReference type="KEGG" id="paa:Paes_1587"/>
<dbReference type="eggNOG" id="COG0442">
    <property type="taxonomic scope" value="Bacteria"/>
</dbReference>
<dbReference type="HOGENOM" id="CLU_001882_4_2_10"/>
<dbReference type="Proteomes" id="UP000002725">
    <property type="component" value="Chromosome"/>
</dbReference>
<dbReference type="GO" id="GO:0017101">
    <property type="term" value="C:aminoacyl-tRNA synthetase multienzyme complex"/>
    <property type="evidence" value="ECO:0007669"/>
    <property type="project" value="TreeGrafter"/>
</dbReference>
<dbReference type="GO" id="GO:0005737">
    <property type="term" value="C:cytoplasm"/>
    <property type="evidence" value="ECO:0007669"/>
    <property type="project" value="UniProtKB-SubCell"/>
</dbReference>
<dbReference type="GO" id="GO:0005524">
    <property type="term" value="F:ATP binding"/>
    <property type="evidence" value="ECO:0007669"/>
    <property type="project" value="UniProtKB-UniRule"/>
</dbReference>
<dbReference type="GO" id="GO:0004827">
    <property type="term" value="F:proline-tRNA ligase activity"/>
    <property type="evidence" value="ECO:0007669"/>
    <property type="project" value="UniProtKB-UniRule"/>
</dbReference>
<dbReference type="GO" id="GO:0006433">
    <property type="term" value="P:prolyl-tRNA aminoacylation"/>
    <property type="evidence" value="ECO:0007669"/>
    <property type="project" value="UniProtKB-UniRule"/>
</dbReference>
<dbReference type="CDD" id="cd00862">
    <property type="entry name" value="ProRS_anticodon_zinc"/>
    <property type="match status" value="1"/>
</dbReference>
<dbReference type="CDD" id="cd00778">
    <property type="entry name" value="ProRS_core_arch_euk"/>
    <property type="match status" value="1"/>
</dbReference>
<dbReference type="FunFam" id="3.30.930.10:FF:000023">
    <property type="entry name" value="Proline--tRNA ligase"/>
    <property type="match status" value="1"/>
</dbReference>
<dbReference type="Gene3D" id="3.40.50.800">
    <property type="entry name" value="Anticodon-binding domain"/>
    <property type="match status" value="1"/>
</dbReference>
<dbReference type="Gene3D" id="3.30.930.10">
    <property type="entry name" value="Bira Bifunctional Protein, Domain 2"/>
    <property type="match status" value="1"/>
</dbReference>
<dbReference type="Gene3D" id="3.30.110.30">
    <property type="entry name" value="C-terminal domain of ProRS"/>
    <property type="match status" value="1"/>
</dbReference>
<dbReference type="HAMAP" id="MF_01571">
    <property type="entry name" value="Pro_tRNA_synth_type3"/>
    <property type="match status" value="1"/>
</dbReference>
<dbReference type="InterPro" id="IPR002314">
    <property type="entry name" value="aa-tRNA-synt_IIb"/>
</dbReference>
<dbReference type="InterPro" id="IPR006195">
    <property type="entry name" value="aa-tRNA-synth_II"/>
</dbReference>
<dbReference type="InterPro" id="IPR045864">
    <property type="entry name" value="aa-tRNA-synth_II/BPL/LPL"/>
</dbReference>
<dbReference type="InterPro" id="IPR004154">
    <property type="entry name" value="Anticodon-bd"/>
</dbReference>
<dbReference type="InterPro" id="IPR036621">
    <property type="entry name" value="Anticodon-bd_dom_sf"/>
</dbReference>
<dbReference type="InterPro" id="IPR002316">
    <property type="entry name" value="Pro-tRNA-ligase_IIa"/>
</dbReference>
<dbReference type="InterPro" id="IPR004499">
    <property type="entry name" value="Pro-tRNA-ligase_IIa_arc-type"/>
</dbReference>
<dbReference type="InterPro" id="IPR016061">
    <property type="entry name" value="Pro-tRNA_ligase_II_C"/>
</dbReference>
<dbReference type="InterPro" id="IPR017449">
    <property type="entry name" value="Pro-tRNA_synth_II"/>
</dbReference>
<dbReference type="InterPro" id="IPR033721">
    <property type="entry name" value="ProRS_core_arch_euk"/>
</dbReference>
<dbReference type="NCBIfam" id="TIGR00408">
    <property type="entry name" value="proS_fam_I"/>
    <property type="match status" value="1"/>
</dbReference>
<dbReference type="PANTHER" id="PTHR43382:SF2">
    <property type="entry name" value="BIFUNCTIONAL GLUTAMATE_PROLINE--TRNA LIGASE"/>
    <property type="match status" value="1"/>
</dbReference>
<dbReference type="PANTHER" id="PTHR43382">
    <property type="entry name" value="PROLYL-TRNA SYNTHETASE"/>
    <property type="match status" value="1"/>
</dbReference>
<dbReference type="Pfam" id="PF03129">
    <property type="entry name" value="HGTP_anticodon"/>
    <property type="match status" value="1"/>
</dbReference>
<dbReference type="Pfam" id="PF09180">
    <property type="entry name" value="ProRS-C_1"/>
    <property type="match status" value="1"/>
</dbReference>
<dbReference type="Pfam" id="PF00587">
    <property type="entry name" value="tRNA-synt_2b"/>
    <property type="match status" value="1"/>
</dbReference>
<dbReference type="PRINTS" id="PR01046">
    <property type="entry name" value="TRNASYNTHPRO"/>
</dbReference>
<dbReference type="SMART" id="SM00946">
    <property type="entry name" value="ProRS-C_1"/>
    <property type="match status" value="1"/>
</dbReference>
<dbReference type="SUPFAM" id="SSF64586">
    <property type="entry name" value="C-terminal domain of ProRS"/>
    <property type="match status" value="1"/>
</dbReference>
<dbReference type="SUPFAM" id="SSF52954">
    <property type="entry name" value="Class II aaRS ABD-related"/>
    <property type="match status" value="1"/>
</dbReference>
<dbReference type="SUPFAM" id="SSF55681">
    <property type="entry name" value="Class II aaRS and biotin synthetases"/>
    <property type="match status" value="1"/>
</dbReference>
<dbReference type="PROSITE" id="PS50862">
    <property type="entry name" value="AA_TRNA_LIGASE_II"/>
    <property type="match status" value="1"/>
</dbReference>
<proteinExistence type="inferred from homology"/>
<feature type="chain" id="PRO_1000215572" description="Proline--tRNA ligase">
    <location>
        <begin position="1"/>
        <end position="481"/>
    </location>
</feature>
<protein>
    <recommendedName>
        <fullName evidence="1">Proline--tRNA ligase</fullName>
        <ecNumber evidence="1">6.1.1.15</ecNumber>
    </recommendedName>
    <alternativeName>
        <fullName evidence="1">Prolyl-tRNA synthetase</fullName>
        <shortName evidence="1">ProRS</shortName>
    </alternativeName>
</protein>
<name>SYP_PROA2</name>
<reference key="1">
    <citation type="submission" date="2008-06" db="EMBL/GenBank/DDBJ databases">
        <title>Complete sequence of chromosome of Prosthecochloris aestuarii DSM 271.</title>
        <authorList>
            <consortium name="US DOE Joint Genome Institute"/>
            <person name="Lucas S."/>
            <person name="Copeland A."/>
            <person name="Lapidus A."/>
            <person name="Glavina del Rio T."/>
            <person name="Dalin E."/>
            <person name="Tice H."/>
            <person name="Bruce D."/>
            <person name="Goodwin L."/>
            <person name="Pitluck S."/>
            <person name="Schmutz J."/>
            <person name="Larimer F."/>
            <person name="Land M."/>
            <person name="Hauser L."/>
            <person name="Kyrpides N."/>
            <person name="Anderson I."/>
            <person name="Liu Z."/>
            <person name="Li T."/>
            <person name="Zhao F."/>
            <person name="Overmann J."/>
            <person name="Bryant D.A."/>
            <person name="Richardson P."/>
        </authorList>
    </citation>
    <scope>NUCLEOTIDE SEQUENCE [LARGE SCALE GENOMIC DNA]</scope>
    <source>
        <strain>DSM 271 / SK 413</strain>
    </source>
</reference>
<keyword id="KW-0030">Aminoacyl-tRNA synthetase</keyword>
<keyword id="KW-0067">ATP-binding</keyword>
<keyword id="KW-0963">Cytoplasm</keyword>
<keyword id="KW-0436">Ligase</keyword>
<keyword id="KW-0547">Nucleotide-binding</keyword>
<keyword id="KW-0648">Protein biosynthesis</keyword>
<evidence type="ECO:0000255" key="1">
    <source>
        <dbReference type="HAMAP-Rule" id="MF_01571"/>
    </source>
</evidence>
<organism>
    <name type="scientific">Prosthecochloris aestuarii (strain DSM 271 / SK 413)</name>
    <dbReference type="NCBI Taxonomy" id="290512"/>
    <lineage>
        <taxon>Bacteria</taxon>
        <taxon>Pseudomonadati</taxon>
        <taxon>Chlorobiota</taxon>
        <taxon>Chlorobiia</taxon>
        <taxon>Chlorobiales</taxon>
        <taxon>Chlorobiaceae</taxon>
        <taxon>Prosthecochloris</taxon>
    </lineage>
</organism>
<gene>
    <name evidence="1" type="primary">proS</name>
    <name type="ordered locus">Paes_1587</name>
</gene>